<accession>Q5M2X3</accession>
<sequence length="755" mass="85574">MKFNQFSYIPVSPETAYQELRSLGFEVSLDASAKANFESFVRKYFLFFEDTDLALKNWIADPETDLLSFFQSDRPLTAEVFGLVALQLLGFVPNVDFTDSVAFLEKMAFPIAFDGSLNNLHQLLATRTQSGNTLIDQLVAQDLIPISNDYVFFNGKSLATFDTNQLHREVVYVETPVDTDKDGLLDLVKVTILRPNVDFPVPAMMTASPYQQGTNEPSSDKLTHKMEGDLLVKPAGKISLSRPEIKAPEADLTPINPVTKAEERFAHTDTYTLNDYMLARGVASIYVSGVGTFNSEGFMTSGDYQQVLAYKAVIDWLNGRARAFTSRSRQHTITADWASGKVTTTGLSYLGTMSNALATTGVDGLEMVIAEAGISSWYDYYRENGLLVSPGGYPGEDLDTLTEFTYSRALLAGEYLRHQKDYEAYLNELSTAIDRKHGDYNQFWHDRNYVQFADRVKATVVFTHGSQDWNVKPINVYQMFRALPKSLEKHLFFHNGAHVYMNAWQSIDFRESMNALICQKLLGLDNGYTLPTVIWQNNQSEQTWEVLDNFGHDNGKHIQLGKSEASIANHYEEEIFAKYGKAYQSFKDDLFMDKANAITLDFELDQDIQINGRVHLELRVKSSTNRGLISAQVLEMGDKKYLAPIPAPKRMSLDNGRLFKEEALRELPFKQAKYRVITKGHLNLQNRKDLLSIENVTPNEWMTIGLDLQPTIYKLNKGDKLRLVLYTTDFEHTIRDNSDYEVTVDLSQSKMTLPY</sequence>
<feature type="chain" id="PRO_1000045496" description="Xaa-Pro dipeptidyl-peptidase">
    <location>
        <begin position="1"/>
        <end position="755"/>
    </location>
</feature>
<feature type="active site" description="Charge relay system" evidence="1">
    <location>
        <position position="348"/>
    </location>
</feature>
<feature type="active site" description="Charge relay system" evidence="1">
    <location>
        <position position="468"/>
    </location>
</feature>
<feature type="active site" description="Charge relay system" evidence="1">
    <location>
        <position position="498"/>
    </location>
</feature>
<name>PEPX_STRT2</name>
<organism>
    <name type="scientific">Streptococcus thermophilus (strain ATCC BAA-250 / LMG 18311)</name>
    <dbReference type="NCBI Taxonomy" id="264199"/>
    <lineage>
        <taxon>Bacteria</taxon>
        <taxon>Bacillati</taxon>
        <taxon>Bacillota</taxon>
        <taxon>Bacilli</taxon>
        <taxon>Lactobacillales</taxon>
        <taxon>Streptococcaceae</taxon>
        <taxon>Streptococcus</taxon>
    </lineage>
</organism>
<keyword id="KW-0031">Aminopeptidase</keyword>
<keyword id="KW-0963">Cytoplasm</keyword>
<keyword id="KW-0378">Hydrolase</keyword>
<keyword id="KW-0645">Protease</keyword>
<keyword id="KW-1185">Reference proteome</keyword>
<keyword id="KW-0720">Serine protease</keyword>
<reference key="1">
    <citation type="journal article" date="2004" name="Nat. Biotechnol.">
        <title>Complete sequence and comparative genome analysis of the dairy bacterium Streptococcus thermophilus.</title>
        <authorList>
            <person name="Bolotin A."/>
            <person name="Quinquis B."/>
            <person name="Renault P."/>
            <person name="Sorokin A."/>
            <person name="Ehrlich S.D."/>
            <person name="Kulakauskas S."/>
            <person name="Lapidus A."/>
            <person name="Goltsman E."/>
            <person name="Mazur M."/>
            <person name="Pusch G.D."/>
            <person name="Fonstein M."/>
            <person name="Overbeek R."/>
            <person name="Kyprides N."/>
            <person name="Purnelle B."/>
            <person name="Prozzi D."/>
            <person name="Ngui K."/>
            <person name="Masuy D."/>
            <person name="Hancy F."/>
            <person name="Burteau S."/>
            <person name="Boutry M."/>
            <person name="Delcour J."/>
            <person name="Goffeau A."/>
            <person name="Hols P."/>
        </authorList>
    </citation>
    <scope>NUCLEOTIDE SEQUENCE [LARGE SCALE GENOMIC DNA]</scope>
    <source>
        <strain>ATCC BAA-250 / LMG 18311</strain>
    </source>
</reference>
<dbReference type="EC" id="3.4.14.11" evidence="1"/>
<dbReference type="EMBL" id="CP000023">
    <property type="protein sequence ID" value="AAV61274.1"/>
    <property type="molecule type" value="Genomic_DNA"/>
</dbReference>
<dbReference type="RefSeq" id="WP_011226486.1">
    <property type="nucleotide sequence ID" value="NC_006448.1"/>
</dbReference>
<dbReference type="SMR" id="Q5M2X3"/>
<dbReference type="STRING" id="264199.stu1672"/>
<dbReference type="ESTHER" id="strtr-pepx">
    <property type="family name" value="Lactobacillus_peptidase"/>
</dbReference>
<dbReference type="MEROPS" id="S15.001"/>
<dbReference type="GeneID" id="66899417"/>
<dbReference type="KEGG" id="stl:stu1672"/>
<dbReference type="PATRIC" id="fig|264199.4.peg.1647"/>
<dbReference type="eggNOG" id="COG2936">
    <property type="taxonomic scope" value="Bacteria"/>
</dbReference>
<dbReference type="HOGENOM" id="CLU_011800_0_0_9"/>
<dbReference type="Proteomes" id="UP000001170">
    <property type="component" value="Chromosome"/>
</dbReference>
<dbReference type="GO" id="GO:0005737">
    <property type="term" value="C:cytoplasm"/>
    <property type="evidence" value="ECO:0007669"/>
    <property type="project" value="UniProtKB-SubCell"/>
</dbReference>
<dbReference type="GO" id="GO:0004177">
    <property type="term" value="F:aminopeptidase activity"/>
    <property type="evidence" value="ECO:0007669"/>
    <property type="project" value="UniProtKB-KW"/>
</dbReference>
<dbReference type="GO" id="GO:0008239">
    <property type="term" value="F:dipeptidyl-peptidase activity"/>
    <property type="evidence" value="ECO:0007669"/>
    <property type="project" value="UniProtKB-UniRule"/>
</dbReference>
<dbReference type="GO" id="GO:0008236">
    <property type="term" value="F:serine-type peptidase activity"/>
    <property type="evidence" value="ECO:0007669"/>
    <property type="project" value="UniProtKB-KW"/>
</dbReference>
<dbReference type="GO" id="GO:0006508">
    <property type="term" value="P:proteolysis"/>
    <property type="evidence" value="ECO:0007669"/>
    <property type="project" value="UniProtKB-KW"/>
</dbReference>
<dbReference type="Gene3D" id="1.10.246.70">
    <property type="match status" value="1"/>
</dbReference>
<dbReference type="Gene3D" id="3.40.50.1820">
    <property type="entry name" value="alpha/beta hydrolase"/>
    <property type="match status" value="1"/>
</dbReference>
<dbReference type="Gene3D" id="2.60.120.260">
    <property type="entry name" value="Galactose-binding domain-like"/>
    <property type="match status" value="1"/>
</dbReference>
<dbReference type="HAMAP" id="MF_00698">
    <property type="entry name" value="Aminopeptidase_S15"/>
    <property type="match status" value="1"/>
</dbReference>
<dbReference type="InterPro" id="IPR029058">
    <property type="entry name" value="AB_hydrolase_fold"/>
</dbReference>
<dbReference type="InterPro" id="IPR008979">
    <property type="entry name" value="Galactose-bd-like_sf"/>
</dbReference>
<dbReference type="InterPro" id="IPR008252">
    <property type="entry name" value="Pept_S15_Xpro"/>
</dbReference>
<dbReference type="InterPro" id="IPR015251">
    <property type="entry name" value="PepX_N_dom"/>
</dbReference>
<dbReference type="InterPro" id="IPR036313">
    <property type="entry name" value="PepX_N_dom_sf"/>
</dbReference>
<dbReference type="InterPro" id="IPR000383">
    <property type="entry name" value="Xaa-Pro-like_dom"/>
</dbReference>
<dbReference type="InterPro" id="IPR013736">
    <property type="entry name" value="Xaa-Pro_dipept_C"/>
</dbReference>
<dbReference type="NCBIfam" id="NF003783">
    <property type="entry name" value="PRK05371.1-4"/>
    <property type="match status" value="1"/>
</dbReference>
<dbReference type="Pfam" id="PF02129">
    <property type="entry name" value="Peptidase_S15"/>
    <property type="match status" value="1"/>
</dbReference>
<dbReference type="Pfam" id="PF08530">
    <property type="entry name" value="PepX_C"/>
    <property type="match status" value="1"/>
</dbReference>
<dbReference type="Pfam" id="PF09168">
    <property type="entry name" value="PepX_N"/>
    <property type="match status" value="1"/>
</dbReference>
<dbReference type="PRINTS" id="PR00923">
    <property type="entry name" value="LACTOPTASE"/>
</dbReference>
<dbReference type="SMART" id="SM00939">
    <property type="entry name" value="PepX_C"/>
    <property type="match status" value="1"/>
</dbReference>
<dbReference type="SMART" id="SM00940">
    <property type="entry name" value="PepX_N"/>
    <property type="match status" value="1"/>
</dbReference>
<dbReference type="SUPFAM" id="SSF53474">
    <property type="entry name" value="alpha/beta-Hydrolases"/>
    <property type="match status" value="1"/>
</dbReference>
<dbReference type="SUPFAM" id="SSF49785">
    <property type="entry name" value="Galactose-binding domain-like"/>
    <property type="match status" value="1"/>
</dbReference>
<dbReference type="SUPFAM" id="SSF81761">
    <property type="entry name" value="X-Prolyl dipeptidyl aminopeptidase PepX, N-terminal domain"/>
    <property type="match status" value="1"/>
</dbReference>
<evidence type="ECO:0000255" key="1">
    <source>
        <dbReference type="HAMAP-Rule" id="MF_00698"/>
    </source>
</evidence>
<gene>
    <name evidence="1" type="primary">pepX</name>
    <name type="ordered locus">stu1672</name>
</gene>
<proteinExistence type="inferred from homology"/>
<protein>
    <recommendedName>
        <fullName evidence="1">Xaa-Pro dipeptidyl-peptidase</fullName>
        <ecNumber evidence="1">3.4.14.11</ecNumber>
    </recommendedName>
    <alternativeName>
        <fullName evidence="1">X-Pro dipeptidyl-peptidase</fullName>
    </alternativeName>
    <alternativeName>
        <fullName evidence="1">X-prolyl-dipeptidyl aminopeptidase</fullName>
        <shortName evidence="1">X-PDAP</shortName>
    </alternativeName>
</protein>
<comment type="function">
    <text evidence="1">Removes N-terminal dipeptides sequentially from polypeptides having unsubstituted N-termini provided that the penultimate residue is proline.</text>
</comment>
<comment type="catalytic activity">
    <reaction evidence="1">
        <text>Hydrolyzes Xaa-Pro-|- bonds to release unblocked, N-terminal dipeptides from substrates including Ala-Pro-|-p-nitroanilide and (sequentially) Tyr-Pro-|-Phe-Pro-|-Gly-Pro-|-Ile.</text>
        <dbReference type="EC" id="3.4.14.11"/>
    </reaction>
</comment>
<comment type="subunit">
    <text evidence="1">Homodimer.</text>
</comment>
<comment type="subcellular location">
    <subcellularLocation>
        <location evidence="1">Cytoplasm</location>
    </subcellularLocation>
</comment>
<comment type="similarity">
    <text evidence="1">Belongs to the peptidase S15 family.</text>
</comment>